<reference key="1">
    <citation type="journal article" date="2010" name="J. Bacteriol.">
        <title>The genome sequence of the biocontrol agent Pantoea vagans strain C9-1.</title>
        <authorList>
            <person name="Smits T.H."/>
            <person name="Rezzonico F."/>
            <person name="Kamber T."/>
            <person name="Goesmann A."/>
            <person name="Ishimaru C.A."/>
            <person name="Stockwell V.O."/>
            <person name="Frey J.E."/>
            <person name="Duffy B."/>
        </authorList>
    </citation>
    <scope>NUCLEOTIDE SEQUENCE [LARGE SCALE GENOMIC DNA]</scope>
    <source>
        <strain>C9-1</strain>
    </source>
</reference>
<gene>
    <name evidence="1" type="primary">tatD</name>
    <name type="ordered locus">Pvag_3436</name>
</gene>
<organism>
    <name type="scientific">Pantoea vagans (strain C9-1)</name>
    <name type="common">Pantoea agglomerans (strain C9-1)</name>
    <dbReference type="NCBI Taxonomy" id="712898"/>
    <lineage>
        <taxon>Bacteria</taxon>
        <taxon>Pseudomonadati</taxon>
        <taxon>Pseudomonadota</taxon>
        <taxon>Gammaproteobacteria</taxon>
        <taxon>Enterobacterales</taxon>
        <taxon>Erwiniaceae</taxon>
        <taxon>Pantoea</taxon>
    </lineage>
</organism>
<comment type="function">
    <text evidence="1">3'-5' exonuclease that prefers single-stranded DNA and RNA. May play a role in the H(2)O(2)-induced DNA damage repair.</text>
</comment>
<comment type="cofactor">
    <cofactor evidence="1">
        <name>Mg(2+)</name>
        <dbReference type="ChEBI" id="CHEBI:18420"/>
    </cofactor>
</comment>
<comment type="subunit">
    <text evidence="1">Monomer.</text>
</comment>
<comment type="subcellular location">
    <subcellularLocation>
        <location evidence="1">Cytoplasm</location>
    </subcellularLocation>
</comment>
<comment type="similarity">
    <text evidence="1">Belongs to the metallo-dependent hydrolases superfamily. TatD-type hydrolase family. TatD subfamily.</text>
</comment>
<protein>
    <recommendedName>
        <fullName evidence="1">3'-5' ssDNA/RNA exonuclease TatD</fullName>
        <ecNumber evidence="1">3.1.11.-</ecNumber>
        <ecNumber evidence="1">3.1.13.-</ecNumber>
    </recommendedName>
    <alternativeName>
        <fullName evidence="1">DNase TatD</fullName>
    </alternativeName>
</protein>
<keyword id="KW-0963">Cytoplasm</keyword>
<keyword id="KW-0269">Exonuclease</keyword>
<keyword id="KW-0378">Hydrolase</keyword>
<keyword id="KW-0460">Magnesium</keyword>
<keyword id="KW-0479">Metal-binding</keyword>
<keyword id="KW-0540">Nuclease</keyword>
<name>TATD_PANVC</name>
<proteinExistence type="inferred from homology"/>
<evidence type="ECO:0000255" key="1">
    <source>
        <dbReference type="HAMAP-Rule" id="MF_00901"/>
    </source>
</evidence>
<feature type="chain" id="PRO_0000412747" description="3'-5' ssDNA/RNA exonuclease TatD">
    <location>
        <begin position="1"/>
        <end position="260"/>
    </location>
</feature>
<feature type="binding site" evidence="1">
    <location>
        <position position="92"/>
    </location>
    <ligand>
        <name>a divalent metal cation</name>
        <dbReference type="ChEBI" id="CHEBI:60240"/>
    </ligand>
</feature>
<feature type="binding site" evidence="1">
    <location>
        <position position="128"/>
    </location>
    <ligand>
        <name>a divalent metal cation</name>
        <dbReference type="ChEBI" id="CHEBI:60240"/>
    </ligand>
</feature>
<feature type="binding site" evidence="1">
    <location>
        <position position="153"/>
    </location>
    <ligand>
        <name>a divalent metal cation</name>
        <dbReference type="ChEBI" id="CHEBI:60240"/>
    </ligand>
</feature>
<accession>E1SKR8</accession>
<sequence>MFDIGVNLTSTQFASDRQKVVKRARDAGVTGMLITGTNALESQHAQRLAEAQPGFCWSTAGVHPHHASEWSTEIASTLRRLAEKPEVVAIGECGLDFNRNLSAHEQQEYAFDAQLALAAELNMPVFLHCREAHARFAAVLEPWLPKLAGAVIHCFTGTRDELEACLAMGLSVGITGWVCDERRGLELRELLPLIPADRLLLETDAPYLLPRDMRPRPTSRRNEPCFLPHIVNQVATWRGESAEELATRIDQNARTLFRLA</sequence>
<dbReference type="EC" id="3.1.11.-" evidence="1"/>
<dbReference type="EC" id="3.1.13.-" evidence="1"/>
<dbReference type="EMBL" id="CP002206">
    <property type="protein sequence ID" value="ADO11568.1"/>
    <property type="molecule type" value="Genomic_DNA"/>
</dbReference>
<dbReference type="RefSeq" id="WP_013359716.1">
    <property type="nucleotide sequence ID" value="NC_014562.1"/>
</dbReference>
<dbReference type="SMR" id="E1SKR8"/>
<dbReference type="KEGG" id="pva:Pvag_3436"/>
<dbReference type="eggNOG" id="COG0084">
    <property type="taxonomic scope" value="Bacteria"/>
</dbReference>
<dbReference type="HOGENOM" id="CLU_031506_1_2_6"/>
<dbReference type="OrthoDB" id="9810005at2"/>
<dbReference type="GO" id="GO:0005737">
    <property type="term" value="C:cytoplasm"/>
    <property type="evidence" value="ECO:0007669"/>
    <property type="project" value="UniProtKB-SubCell"/>
</dbReference>
<dbReference type="GO" id="GO:0000175">
    <property type="term" value="F:3'-5'-RNA exonuclease activity"/>
    <property type="evidence" value="ECO:0007669"/>
    <property type="project" value="UniProtKB-UniRule"/>
</dbReference>
<dbReference type="GO" id="GO:0000287">
    <property type="term" value="F:magnesium ion binding"/>
    <property type="evidence" value="ECO:0007669"/>
    <property type="project" value="UniProtKB-UniRule"/>
</dbReference>
<dbReference type="GO" id="GO:0008310">
    <property type="term" value="F:single-stranded DNA 3'-5' DNA exonuclease activity"/>
    <property type="evidence" value="ECO:0007669"/>
    <property type="project" value="UniProtKB-UniRule"/>
</dbReference>
<dbReference type="CDD" id="cd01310">
    <property type="entry name" value="TatD_DNAse"/>
    <property type="match status" value="1"/>
</dbReference>
<dbReference type="FunFam" id="3.20.20.140:FF:000018">
    <property type="entry name" value="3'-5' ssDNA/RNA exonuclease TatD"/>
    <property type="match status" value="1"/>
</dbReference>
<dbReference type="Gene3D" id="3.20.20.140">
    <property type="entry name" value="Metal-dependent hydrolases"/>
    <property type="match status" value="1"/>
</dbReference>
<dbReference type="HAMAP" id="MF_00901">
    <property type="entry name" value="TatD_exonuclease"/>
    <property type="match status" value="1"/>
</dbReference>
<dbReference type="InterPro" id="IPR018228">
    <property type="entry name" value="DNase_TatD-rel_CS"/>
</dbReference>
<dbReference type="InterPro" id="IPR024918">
    <property type="entry name" value="Exonuc_TatD"/>
</dbReference>
<dbReference type="InterPro" id="IPR032466">
    <property type="entry name" value="Metal_Hydrolase"/>
</dbReference>
<dbReference type="InterPro" id="IPR001130">
    <property type="entry name" value="TatD-like"/>
</dbReference>
<dbReference type="InterPro" id="IPR050891">
    <property type="entry name" value="TatD-type_Hydrolase"/>
</dbReference>
<dbReference type="NCBIfam" id="NF007745">
    <property type="entry name" value="PRK10425.1"/>
    <property type="match status" value="1"/>
</dbReference>
<dbReference type="PANTHER" id="PTHR10060:SF15">
    <property type="entry name" value="DEOXYRIBONUCLEASE TATDN1"/>
    <property type="match status" value="1"/>
</dbReference>
<dbReference type="PANTHER" id="PTHR10060">
    <property type="entry name" value="TATD FAMILY DEOXYRIBONUCLEASE"/>
    <property type="match status" value="1"/>
</dbReference>
<dbReference type="Pfam" id="PF01026">
    <property type="entry name" value="TatD_DNase"/>
    <property type="match status" value="1"/>
</dbReference>
<dbReference type="PIRSF" id="PIRSF005902">
    <property type="entry name" value="DNase_TatD"/>
    <property type="match status" value="1"/>
</dbReference>
<dbReference type="SUPFAM" id="SSF51556">
    <property type="entry name" value="Metallo-dependent hydrolases"/>
    <property type="match status" value="1"/>
</dbReference>
<dbReference type="PROSITE" id="PS01091">
    <property type="entry name" value="TATD_3"/>
    <property type="match status" value="1"/>
</dbReference>